<reference key="1">
    <citation type="journal article" date="1997" name="Nature">
        <title>The nucleotide sequence of Saccharomyces cerevisiae chromosome IV.</title>
        <authorList>
            <person name="Jacq C."/>
            <person name="Alt-Moerbe J."/>
            <person name="Andre B."/>
            <person name="Arnold W."/>
            <person name="Bahr A."/>
            <person name="Ballesta J.P.G."/>
            <person name="Bargues M."/>
            <person name="Baron L."/>
            <person name="Becker A."/>
            <person name="Biteau N."/>
            <person name="Bloecker H."/>
            <person name="Blugeon C."/>
            <person name="Boskovic J."/>
            <person name="Brandt P."/>
            <person name="Brueckner M."/>
            <person name="Buitrago M.J."/>
            <person name="Coster F."/>
            <person name="Delaveau T."/>
            <person name="del Rey F."/>
            <person name="Dujon B."/>
            <person name="Eide L.G."/>
            <person name="Garcia-Cantalejo J.M."/>
            <person name="Goffeau A."/>
            <person name="Gomez-Peris A."/>
            <person name="Granotier C."/>
            <person name="Hanemann V."/>
            <person name="Hankeln T."/>
            <person name="Hoheisel J.D."/>
            <person name="Jaeger W."/>
            <person name="Jimenez A."/>
            <person name="Jonniaux J.-L."/>
            <person name="Kraemer C."/>
            <person name="Kuester H."/>
            <person name="Laamanen P."/>
            <person name="Legros Y."/>
            <person name="Louis E.J."/>
            <person name="Moeller-Rieker S."/>
            <person name="Monnet A."/>
            <person name="Moro M."/>
            <person name="Mueller-Auer S."/>
            <person name="Nussbaumer B."/>
            <person name="Paricio N."/>
            <person name="Paulin L."/>
            <person name="Perea J."/>
            <person name="Perez-Alonso M."/>
            <person name="Perez-Ortin J.E."/>
            <person name="Pohl T.M."/>
            <person name="Prydz H."/>
            <person name="Purnelle B."/>
            <person name="Rasmussen S.W."/>
            <person name="Remacha M.A."/>
            <person name="Revuelta J.L."/>
            <person name="Rieger M."/>
            <person name="Salom D."/>
            <person name="Saluz H.P."/>
            <person name="Saiz J.E."/>
            <person name="Saren A.-M."/>
            <person name="Schaefer M."/>
            <person name="Scharfe M."/>
            <person name="Schmidt E.R."/>
            <person name="Schneider C."/>
            <person name="Scholler P."/>
            <person name="Schwarz S."/>
            <person name="Soler-Mira A."/>
            <person name="Urrestarazu L.A."/>
            <person name="Verhasselt P."/>
            <person name="Vissers S."/>
            <person name="Voet M."/>
            <person name="Volckaert G."/>
            <person name="Wagner G."/>
            <person name="Wambutt R."/>
            <person name="Wedler E."/>
            <person name="Wedler H."/>
            <person name="Woelfl S."/>
            <person name="Harris D.E."/>
            <person name="Bowman S."/>
            <person name="Brown D."/>
            <person name="Churcher C.M."/>
            <person name="Connor R."/>
            <person name="Dedman K."/>
            <person name="Gentles S."/>
            <person name="Hamlin N."/>
            <person name="Hunt S."/>
            <person name="Jones L."/>
            <person name="McDonald S."/>
            <person name="Murphy L.D."/>
            <person name="Niblett D."/>
            <person name="Odell C."/>
            <person name="Oliver K."/>
            <person name="Rajandream M.A."/>
            <person name="Richards C."/>
            <person name="Shore L."/>
            <person name="Walsh S.V."/>
            <person name="Barrell B.G."/>
            <person name="Dietrich F.S."/>
            <person name="Mulligan J.T."/>
            <person name="Allen E."/>
            <person name="Araujo R."/>
            <person name="Aviles E."/>
            <person name="Berno A."/>
            <person name="Carpenter J."/>
            <person name="Chen E."/>
            <person name="Cherry J.M."/>
            <person name="Chung E."/>
            <person name="Duncan M."/>
            <person name="Hunicke-Smith S."/>
            <person name="Hyman R.W."/>
            <person name="Komp C."/>
            <person name="Lashkari D."/>
            <person name="Lew H."/>
            <person name="Lin D."/>
            <person name="Mosedale D."/>
            <person name="Nakahara K."/>
            <person name="Namath A."/>
            <person name="Oefner P."/>
            <person name="Oh C."/>
            <person name="Petel F.X."/>
            <person name="Roberts D."/>
            <person name="Schramm S."/>
            <person name="Schroeder M."/>
            <person name="Shogren T."/>
            <person name="Shroff N."/>
            <person name="Winant A."/>
            <person name="Yelton M.A."/>
            <person name="Botstein D."/>
            <person name="Davis R.W."/>
            <person name="Johnston M."/>
            <person name="Andrews S."/>
            <person name="Brinkman R."/>
            <person name="Cooper J."/>
            <person name="Ding H."/>
            <person name="Du Z."/>
            <person name="Favello A."/>
            <person name="Fulton L."/>
            <person name="Gattung S."/>
            <person name="Greco T."/>
            <person name="Hallsworth K."/>
            <person name="Hawkins J."/>
            <person name="Hillier L.W."/>
            <person name="Jier M."/>
            <person name="Johnson D."/>
            <person name="Johnston L."/>
            <person name="Kirsten J."/>
            <person name="Kucaba T."/>
            <person name="Langston Y."/>
            <person name="Latreille P."/>
            <person name="Le T."/>
            <person name="Mardis E."/>
            <person name="Menezes S."/>
            <person name="Miller N."/>
            <person name="Nhan M."/>
            <person name="Pauley A."/>
            <person name="Peluso D."/>
            <person name="Rifkin L."/>
            <person name="Riles L."/>
            <person name="Taich A."/>
            <person name="Trevaskis E."/>
            <person name="Vignati D."/>
            <person name="Wilcox L."/>
            <person name="Wohldman P."/>
            <person name="Vaudin M."/>
            <person name="Wilson R."/>
            <person name="Waterston R."/>
            <person name="Albermann K."/>
            <person name="Hani J."/>
            <person name="Heumann K."/>
            <person name="Kleine K."/>
            <person name="Mewes H.-W."/>
            <person name="Zollner A."/>
            <person name="Zaccaria P."/>
        </authorList>
    </citation>
    <scope>NUCLEOTIDE SEQUENCE [LARGE SCALE GENOMIC DNA]</scope>
    <source>
        <strain>ATCC 204508 / S288c</strain>
    </source>
</reference>
<reference key="2">
    <citation type="journal article" date="2014" name="G3 (Bethesda)">
        <title>The reference genome sequence of Saccharomyces cerevisiae: Then and now.</title>
        <authorList>
            <person name="Engel S.R."/>
            <person name="Dietrich F.S."/>
            <person name="Fisk D.G."/>
            <person name="Binkley G."/>
            <person name="Balakrishnan R."/>
            <person name="Costanzo M.C."/>
            <person name="Dwight S.S."/>
            <person name="Hitz B.C."/>
            <person name="Karra K."/>
            <person name="Nash R.S."/>
            <person name="Weng S."/>
            <person name="Wong E.D."/>
            <person name="Lloyd P."/>
            <person name="Skrzypek M.S."/>
            <person name="Miyasato S.R."/>
            <person name="Simison M."/>
            <person name="Cherry J.M."/>
        </authorList>
    </citation>
    <scope>GENOME REANNOTATION</scope>
    <source>
        <strain>ATCC 204508 / S288c</strain>
    </source>
</reference>
<reference key="3">
    <citation type="journal article" date="2003" name="Nature">
        <title>Global analysis of protein localization in budding yeast.</title>
        <authorList>
            <person name="Huh W.-K."/>
            <person name="Falvo J.V."/>
            <person name="Gerke L.C."/>
            <person name="Carroll A.S."/>
            <person name="Howson R.W."/>
            <person name="Weissman J.S."/>
            <person name="O'Shea E.K."/>
        </authorList>
    </citation>
    <scope>SUBCELLULAR LOCATION [LARGE SCALE ANALYSIS]</scope>
</reference>
<reference key="4">
    <citation type="journal article" date="2003" name="Nature">
        <title>Global analysis of protein expression in yeast.</title>
        <authorList>
            <person name="Ghaemmaghami S."/>
            <person name="Huh W.-K."/>
            <person name="Bower K."/>
            <person name="Howson R.W."/>
            <person name="Belle A."/>
            <person name="Dephoure N."/>
            <person name="O'Shea E.K."/>
            <person name="Weissman J.S."/>
        </authorList>
    </citation>
    <scope>LEVEL OF PROTEIN EXPRESSION [LARGE SCALE ANALYSIS]</scope>
</reference>
<reference key="5">
    <citation type="journal article" date="2004" name="EMBO Rep.">
        <title>Shp1 and Ubx2 are adaptors of Cdc48 involved in ubiquitin-dependent protein degradation.</title>
        <authorList>
            <person name="Schuberth C."/>
            <person name="Richly H."/>
            <person name="Rumpf S."/>
            <person name="Buchberger A."/>
        </authorList>
    </citation>
    <scope>INTERACTION WITH CDC48</scope>
</reference>
<reference key="6">
    <citation type="journal article" date="2007" name="J. Proteome Res.">
        <title>Large-scale phosphorylation analysis of alpha-factor-arrested Saccharomyces cerevisiae.</title>
        <authorList>
            <person name="Li X."/>
            <person name="Gerber S.A."/>
            <person name="Rudner A.D."/>
            <person name="Beausoleil S.A."/>
            <person name="Haas W."/>
            <person name="Villen J."/>
            <person name="Elias J.E."/>
            <person name="Gygi S.P."/>
        </authorList>
    </citation>
    <scope>PHOSPHORYLATION [LARGE SCALE ANALYSIS] AT SER-139</scope>
    <scope>IDENTIFICATION BY MASS SPECTROMETRY [LARGE SCALE ANALYSIS]</scope>
    <source>
        <strain>ADR376</strain>
    </source>
</reference>
<reference key="7">
    <citation type="journal article" date="2008" name="Mol. Cell. Proteomics">
        <title>A multidimensional chromatography technology for in-depth phosphoproteome analysis.</title>
        <authorList>
            <person name="Albuquerque C.P."/>
            <person name="Smolka M.B."/>
            <person name="Payne S.H."/>
            <person name="Bafna V."/>
            <person name="Eng J."/>
            <person name="Zhou H."/>
        </authorList>
    </citation>
    <scope>PHOSPHORYLATION [LARGE SCALE ANALYSIS] AT SER-139</scope>
    <scope>IDENTIFICATION BY MASS SPECTROMETRY [LARGE SCALE ANALYSIS]</scope>
</reference>
<reference key="8">
    <citation type="journal article" date="2009" name="Science">
        <title>Global analysis of Cdk1 substrate phosphorylation sites provides insights into evolution.</title>
        <authorList>
            <person name="Holt L.J."/>
            <person name="Tuch B.B."/>
            <person name="Villen J."/>
            <person name="Johnson A.D."/>
            <person name="Gygi S.P."/>
            <person name="Morgan D.O."/>
        </authorList>
    </citation>
    <scope>PHOSPHORYLATION [LARGE SCALE ANALYSIS] AT SER-139</scope>
    <scope>IDENTIFICATION BY MASS SPECTROMETRY [LARGE SCALE ANALYSIS]</scope>
</reference>
<evidence type="ECO:0000250" key="1"/>
<evidence type="ECO:0000255" key="2">
    <source>
        <dbReference type="PROSITE-ProRule" id="PRU00215"/>
    </source>
</evidence>
<evidence type="ECO:0000256" key="3">
    <source>
        <dbReference type="SAM" id="MobiDB-lite"/>
    </source>
</evidence>
<evidence type="ECO:0000269" key="4">
    <source>
    </source>
</evidence>
<evidence type="ECO:0000269" key="5">
    <source>
    </source>
</evidence>
<evidence type="ECO:0000269" key="6">
    <source>
    </source>
</evidence>
<evidence type="ECO:0007744" key="7">
    <source>
    </source>
</evidence>
<evidence type="ECO:0007744" key="8">
    <source>
    </source>
</evidence>
<evidence type="ECO:0007744" key="9">
    <source>
    </source>
</evidence>
<accession>Q06682</accession>
<accession>D6VSW2</accession>
<sequence length="500" mass="56737">MSEGKVDEFMAITGADDAAIATQFIEMADGNLNTAISLFFENGGAALLSSNNTPTPSNSTPMAPTSVDSDADAQLAERLQREAYQQQQPDQDYVRPPDEARHEVLTETSGFPISYGGIGGRFEPLHRVNDMFDEGRPESIFNQRLDDTNTNTYINDNSSDSLDSEEENDDDEYEYVEEPVIELDEDGNIKEYTKLVRKPKTISKEQKLALLFRPPFSIMSKLDLDAAKQKARAKQKWIMINIQDSGIFQCQALNRDLWSSRPVKTIIKENFVFLQYQYESRNAQPYLQFYHLNNKDDLPHIAILDPITGERVKQWNRVVPIPEQFISEINEFLASFSLDPKVPNPTVNEPLPKVDPTTLTEEQQMELAIKESLNNNSSKSNQEEVPSTGEEQKRVQEPDPFSTIEARVHPEPPNKPGITTRIQIRTGDGSRLVRRFNALEDTVRTIYEVIKTEMDGFADSRFTLNDHQREDLIDKLNMTIADAGLKNSSLLLEKLDPEIE</sequence>
<proteinExistence type="evidence at protein level"/>
<dbReference type="EMBL" id="U32517">
    <property type="protein sequence ID" value="AAB64765.1"/>
    <property type="molecule type" value="Genomic_DNA"/>
</dbReference>
<dbReference type="EMBL" id="BK006938">
    <property type="protein sequence ID" value="DAA12172.1"/>
    <property type="molecule type" value="Genomic_DNA"/>
</dbReference>
<dbReference type="PIR" id="S59795">
    <property type="entry name" value="S59795"/>
</dbReference>
<dbReference type="RefSeq" id="NP_010617.1">
    <property type="nucleotide sequence ID" value="NM_001180638.1"/>
</dbReference>
<dbReference type="SMR" id="Q06682"/>
<dbReference type="BioGRID" id="32387">
    <property type="interactions" value="90"/>
</dbReference>
<dbReference type="DIP" id="DIP-3938N"/>
<dbReference type="FunCoup" id="Q06682">
    <property type="interactions" value="1128"/>
</dbReference>
<dbReference type="IntAct" id="Q06682">
    <property type="interactions" value="19"/>
</dbReference>
<dbReference type="MINT" id="Q06682"/>
<dbReference type="STRING" id="4932.YDR330W"/>
<dbReference type="GlyGen" id="Q06682">
    <property type="glycosylation" value="1 site"/>
</dbReference>
<dbReference type="iPTMnet" id="Q06682"/>
<dbReference type="PaxDb" id="4932-YDR330W"/>
<dbReference type="PeptideAtlas" id="Q06682"/>
<dbReference type="EnsemblFungi" id="YDR330W_mRNA">
    <property type="protein sequence ID" value="YDR330W"/>
    <property type="gene ID" value="YDR330W"/>
</dbReference>
<dbReference type="GeneID" id="851930"/>
<dbReference type="KEGG" id="sce:YDR330W"/>
<dbReference type="AGR" id="SGD:S000002738"/>
<dbReference type="SGD" id="S000002738">
    <property type="gene designation" value="UBX5"/>
</dbReference>
<dbReference type="VEuPathDB" id="FungiDB:YDR330W"/>
<dbReference type="eggNOG" id="KOG1364">
    <property type="taxonomic scope" value="Eukaryota"/>
</dbReference>
<dbReference type="GeneTree" id="ENSGT00390000018687"/>
<dbReference type="HOGENOM" id="CLU_021255_2_1_1"/>
<dbReference type="InParanoid" id="Q06682"/>
<dbReference type="OMA" id="PAIFDCQ"/>
<dbReference type="OrthoDB" id="270602at2759"/>
<dbReference type="BioCyc" id="YEAST:G3O-29886-MONOMER"/>
<dbReference type="Reactome" id="R-SCE-8951664">
    <property type="pathway name" value="Neddylation"/>
</dbReference>
<dbReference type="Reactome" id="R-SCE-9755511">
    <property type="pathway name" value="KEAP1-NFE2L2 pathway"/>
</dbReference>
<dbReference type="BioGRID-ORCS" id="851930">
    <property type="hits" value="5 hits in 10 CRISPR screens"/>
</dbReference>
<dbReference type="PRO" id="PR:Q06682"/>
<dbReference type="Proteomes" id="UP000002311">
    <property type="component" value="Chromosome IV"/>
</dbReference>
<dbReference type="RNAct" id="Q06682">
    <property type="molecule type" value="protein"/>
</dbReference>
<dbReference type="GO" id="GO:0005737">
    <property type="term" value="C:cytoplasm"/>
    <property type="evidence" value="ECO:0007005"/>
    <property type="project" value="SGD"/>
</dbReference>
<dbReference type="GO" id="GO:0005634">
    <property type="term" value="C:nucleus"/>
    <property type="evidence" value="ECO:0007005"/>
    <property type="project" value="SGD"/>
</dbReference>
<dbReference type="GO" id="GO:0043130">
    <property type="term" value="F:ubiquitin binding"/>
    <property type="evidence" value="ECO:0000318"/>
    <property type="project" value="GO_Central"/>
</dbReference>
<dbReference type="GO" id="GO:0043161">
    <property type="term" value="P:proteasome-mediated ubiquitin-dependent protein catabolic process"/>
    <property type="evidence" value="ECO:0000315"/>
    <property type="project" value="SGD"/>
</dbReference>
<dbReference type="CDD" id="cd02958">
    <property type="entry name" value="UAS"/>
    <property type="match status" value="1"/>
</dbReference>
<dbReference type="CDD" id="cd14346">
    <property type="entry name" value="UBA_Ubx5_like"/>
    <property type="match status" value="1"/>
</dbReference>
<dbReference type="CDD" id="cd01767">
    <property type="entry name" value="UBX"/>
    <property type="match status" value="1"/>
</dbReference>
<dbReference type="FunFam" id="1.10.8.10:FF:000117">
    <property type="entry name" value="UBX domain-containing protein 5"/>
    <property type="match status" value="1"/>
</dbReference>
<dbReference type="Gene3D" id="1.10.8.10">
    <property type="entry name" value="DNA helicase RuvA subunit, C-terminal domain"/>
    <property type="match status" value="1"/>
</dbReference>
<dbReference type="Gene3D" id="3.40.30.10">
    <property type="entry name" value="Glutaredoxin"/>
    <property type="match status" value="1"/>
</dbReference>
<dbReference type="Gene3D" id="3.10.20.90">
    <property type="entry name" value="Phosphatidylinositol 3-kinase Catalytic Subunit, Chain A, domain 1"/>
    <property type="match status" value="1"/>
</dbReference>
<dbReference type="InterPro" id="IPR036249">
    <property type="entry name" value="Thioredoxin-like_sf"/>
</dbReference>
<dbReference type="InterPro" id="IPR006577">
    <property type="entry name" value="UAS"/>
</dbReference>
<dbReference type="InterPro" id="IPR009060">
    <property type="entry name" value="UBA-like_sf"/>
</dbReference>
<dbReference type="InterPro" id="IPR029071">
    <property type="entry name" value="Ubiquitin-like_domsf"/>
</dbReference>
<dbReference type="InterPro" id="IPR001012">
    <property type="entry name" value="UBX_dom"/>
</dbReference>
<dbReference type="InterPro" id="IPR050730">
    <property type="entry name" value="UBX_domain-protein"/>
</dbReference>
<dbReference type="PANTHER" id="PTHR23322">
    <property type="entry name" value="FAS-ASSOCIATED PROTEIN"/>
    <property type="match status" value="1"/>
</dbReference>
<dbReference type="PANTHER" id="PTHR23322:SF6">
    <property type="entry name" value="UBX DOMAIN-CONTAINING PROTEIN 7"/>
    <property type="match status" value="1"/>
</dbReference>
<dbReference type="Pfam" id="PF13899">
    <property type="entry name" value="Thioredoxin_7"/>
    <property type="match status" value="1"/>
</dbReference>
<dbReference type="Pfam" id="PF14555">
    <property type="entry name" value="UBA_4"/>
    <property type="match status" value="1"/>
</dbReference>
<dbReference type="Pfam" id="PF00789">
    <property type="entry name" value="UBX"/>
    <property type="match status" value="1"/>
</dbReference>
<dbReference type="SMART" id="SM00594">
    <property type="entry name" value="UAS"/>
    <property type="match status" value="1"/>
</dbReference>
<dbReference type="SMART" id="SM00166">
    <property type="entry name" value="UBX"/>
    <property type="match status" value="1"/>
</dbReference>
<dbReference type="SUPFAM" id="SSF52833">
    <property type="entry name" value="Thioredoxin-like"/>
    <property type="match status" value="1"/>
</dbReference>
<dbReference type="SUPFAM" id="SSF46934">
    <property type="entry name" value="UBA-like"/>
    <property type="match status" value="1"/>
</dbReference>
<dbReference type="SUPFAM" id="SSF54236">
    <property type="entry name" value="Ubiquitin-like"/>
    <property type="match status" value="1"/>
</dbReference>
<dbReference type="PROSITE" id="PS50033">
    <property type="entry name" value="UBX"/>
    <property type="match status" value="1"/>
</dbReference>
<gene>
    <name type="primary">UBX5</name>
    <name type="ordered locus">YDR330W</name>
</gene>
<organism>
    <name type="scientific">Saccharomyces cerevisiae (strain ATCC 204508 / S288c)</name>
    <name type="common">Baker's yeast</name>
    <dbReference type="NCBI Taxonomy" id="559292"/>
    <lineage>
        <taxon>Eukaryota</taxon>
        <taxon>Fungi</taxon>
        <taxon>Dikarya</taxon>
        <taxon>Ascomycota</taxon>
        <taxon>Saccharomycotina</taxon>
        <taxon>Saccharomycetes</taxon>
        <taxon>Saccharomycetales</taxon>
        <taxon>Saccharomycetaceae</taxon>
        <taxon>Saccharomyces</taxon>
    </lineage>
</organism>
<keyword id="KW-0963">Cytoplasm</keyword>
<keyword id="KW-0539">Nucleus</keyword>
<keyword id="KW-0597">Phosphoprotein</keyword>
<keyword id="KW-1185">Reference proteome</keyword>
<keyword id="KW-0833">Ubl conjugation pathway</keyword>
<feature type="chain" id="PRO_0000211002" description="UBX domain-containing protein 5">
    <location>
        <begin position="1"/>
        <end position="500"/>
    </location>
</feature>
<feature type="domain" description="UBX" evidence="2">
    <location>
        <begin position="415"/>
        <end position="493"/>
    </location>
</feature>
<feature type="region of interest" description="Disordered" evidence="3">
    <location>
        <begin position="50"/>
        <end position="70"/>
    </location>
</feature>
<feature type="region of interest" description="Disordered" evidence="3">
    <location>
        <begin position="142"/>
        <end position="169"/>
    </location>
</feature>
<feature type="region of interest" description="Disordered" evidence="3">
    <location>
        <begin position="371"/>
        <end position="399"/>
    </location>
</feature>
<feature type="compositionally biased region" description="Low complexity" evidence="3">
    <location>
        <begin position="50"/>
        <end position="61"/>
    </location>
</feature>
<feature type="compositionally biased region" description="Low complexity" evidence="3">
    <location>
        <begin position="148"/>
        <end position="161"/>
    </location>
</feature>
<feature type="modified residue" description="Phosphoserine" evidence="7 8 9">
    <location>
        <position position="139"/>
    </location>
</feature>
<protein>
    <recommendedName>
        <fullName>UBX domain-containing protein 5</fullName>
    </recommendedName>
</protein>
<name>UBX5_YEAST</name>
<comment type="function">
    <text evidence="1">Involved in CDC48-dependent protein degradation through the ubiquitin/proteasome pathway.</text>
</comment>
<comment type="subunit">
    <text evidence="6">Interacts with CDC48.</text>
</comment>
<comment type="interaction">
    <interactant intactId="EBI-32041">
        <id>Q06682</id>
    </interactant>
    <interactant intactId="EBI-4308">
        <id>P25694</id>
        <label>CDC48</label>
    </interactant>
    <organismsDiffer>false</organismsDiffer>
    <experiments>5</experiments>
</comment>
<comment type="interaction">
    <interactant intactId="EBI-32041">
        <id>Q06682</id>
    </interactant>
    <interactant intactId="EBI-4321">
        <id>Q12018</id>
        <label>CDC53</label>
    </interactant>
    <organismsDiffer>false</organismsDiffer>
    <experiments>2</experiments>
</comment>
<comment type="subcellular location">
    <subcellularLocation>
        <location evidence="4">Nucleus</location>
    </subcellularLocation>
    <subcellularLocation>
        <location evidence="4">Cytoplasm</location>
    </subcellularLocation>
</comment>
<comment type="miscellaneous">
    <text evidence="5">Present with 6630 molecules/cell in log phase SD medium.</text>
</comment>